<proteinExistence type="inferred from homology"/>
<comment type="function">
    <text evidence="1">This protein binds specifically to 23S rRNA; its binding is stimulated by other ribosomal proteins, e.g. L4, L17, and L20. It is important during the early stages of 50S assembly. It makes multiple contacts with different domains of the 23S rRNA in the assembled 50S subunit and ribosome (By similarity).</text>
</comment>
<comment type="function">
    <text evidence="1">The globular domain of the protein is located near the polypeptide exit tunnel on the outside of the subunit, while an extended beta-hairpin is found that lines the wall of the exit tunnel in the center of the 70S ribosome.</text>
</comment>
<comment type="subunit">
    <text evidence="1">Part of the 50S ribosomal subunit.</text>
</comment>
<comment type="similarity">
    <text evidence="1">Belongs to the universal ribosomal protein uL22 family.</text>
</comment>
<protein>
    <recommendedName>
        <fullName evidence="1">Large ribosomal subunit protein uL22</fullName>
    </recommendedName>
    <alternativeName>
        <fullName evidence="2">50S ribosomal protein L22</fullName>
    </alternativeName>
</protein>
<keyword id="KW-1185">Reference proteome</keyword>
<keyword id="KW-0687">Ribonucleoprotein</keyword>
<keyword id="KW-0689">Ribosomal protein</keyword>
<keyword id="KW-0694">RNA-binding</keyword>
<keyword id="KW-0699">rRNA-binding</keyword>
<reference key="1">
    <citation type="submission" date="2008-03" db="EMBL/GenBank/DDBJ databases">
        <title>Complete sequence of Leptothrix cholodnii SP-6.</title>
        <authorList>
            <consortium name="US DOE Joint Genome Institute"/>
            <person name="Copeland A."/>
            <person name="Lucas S."/>
            <person name="Lapidus A."/>
            <person name="Glavina del Rio T."/>
            <person name="Dalin E."/>
            <person name="Tice H."/>
            <person name="Bruce D."/>
            <person name="Goodwin L."/>
            <person name="Pitluck S."/>
            <person name="Chertkov O."/>
            <person name="Brettin T."/>
            <person name="Detter J.C."/>
            <person name="Han C."/>
            <person name="Kuske C.R."/>
            <person name="Schmutz J."/>
            <person name="Larimer F."/>
            <person name="Land M."/>
            <person name="Hauser L."/>
            <person name="Kyrpides N."/>
            <person name="Lykidis A."/>
            <person name="Emerson D."/>
            <person name="Richardson P."/>
        </authorList>
    </citation>
    <scope>NUCLEOTIDE SEQUENCE [LARGE SCALE GENOMIC DNA]</scope>
    <source>
        <strain>ATCC 51168 / LMG 8142 / SP-6</strain>
    </source>
</reference>
<sequence>METQAIVRGVRLSCDKGRLVADLIRGKKVGLALDILTFTQKKAAGIIKKALESAIANAEHNDGADIDELRVTSIYVEQGATLKRFSARAKGRGNRISKPTAHIYVTVGN</sequence>
<dbReference type="EMBL" id="CP001013">
    <property type="protein sequence ID" value="ACB36248.1"/>
    <property type="molecule type" value="Genomic_DNA"/>
</dbReference>
<dbReference type="RefSeq" id="WP_012348993.1">
    <property type="nucleotide sequence ID" value="NC_010524.1"/>
</dbReference>
<dbReference type="SMR" id="B1Y8I2"/>
<dbReference type="STRING" id="395495.Lcho_3994"/>
<dbReference type="KEGG" id="lch:Lcho_3994"/>
<dbReference type="eggNOG" id="COG0091">
    <property type="taxonomic scope" value="Bacteria"/>
</dbReference>
<dbReference type="HOGENOM" id="CLU_083987_3_3_4"/>
<dbReference type="OrthoDB" id="9805969at2"/>
<dbReference type="Proteomes" id="UP000001693">
    <property type="component" value="Chromosome"/>
</dbReference>
<dbReference type="GO" id="GO:0022625">
    <property type="term" value="C:cytosolic large ribosomal subunit"/>
    <property type="evidence" value="ECO:0007669"/>
    <property type="project" value="TreeGrafter"/>
</dbReference>
<dbReference type="GO" id="GO:0019843">
    <property type="term" value="F:rRNA binding"/>
    <property type="evidence" value="ECO:0007669"/>
    <property type="project" value="UniProtKB-UniRule"/>
</dbReference>
<dbReference type="GO" id="GO:0003735">
    <property type="term" value="F:structural constituent of ribosome"/>
    <property type="evidence" value="ECO:0007669"/>
    <property type="project" value="InterPro"/>
</dbReference>
<dbReference type="GO" id="GO:0006412">
    <property type="term" value="P:translation"/>
    <property type="evidence" value="ECO:0007669"/>
    <property type="project" value="UniProtKB-UniRule"/>
</dbReference>
<dbReference type="CDD" id="cd00336">
    <property type="entry name" value="Ribosomal_L22"/>
    <property type="match status" value="1"/>
</dbReference>
<dbReference type="FunFam" id="3.90.470.10:FF:000001">
    <property type="entry name" value="50S ribosomal protein L22"/>
    <property type="match status" value="1"/>
</dbReference>
<dbReference type="Gene3D" id="3.90.470.10">
    <property type="entry name" value="Ribosomal protein L22/L17"/>
    <property type="match status" value="1"/>
</dbReference>
<dbReference type="HAMAP" id="MF_01331_B">
    <property type="entry name" value="Ribosomal_uL22_B"/>
    <property type="match status" value="1"/>
</dbReference>
<dbReference type="InterPro" id="IPR001063">
    <property type="entry name" value="Ribosomal_uL22"/>
</dbReference>
<dbReference type="InterPro" id="IPR005727">
    <property type="entry name" value="Ribosomal_uL22_bac/chlpt-type"/>
</dbReference>
<dbReference type="InterPro" id="IPR047867">
    <property type="entry name" value="Ribosomal_uL22_bac/org-type"/>
</dbReference>
<dbReference type="InterPro" id="IPR018260">
    <property type="entry name" value="Ribosomal_uL22_CS"/>
</dbReference>
<dbReference type="InterPro" id="IPR036394">
    <property type="entry name" value="Ribosomal_uL22_sf"/>
</dbReference>
<dbReference type="NCBIfam" id="TIGR01044">
    <property type="entry name" value="rplV_bact"/>
    <property type="match status" value="1"/>
</dbReference>
<dbReference type="PANTHER" id="PTHR13501">
    <property type="entry name" value="CHLOROPLAST 50S RIBOSOMAL PROTEIN L22-RELATED"/>
    <property type="match status" value="1"/>
</dbReference>
<dbReference type="PANTHER" id="PTHR13501:SF8">
    <property type="entry name" value="LARGE RIBOSOMAL SUBUNIT PROTEIN UL22M"/>
    <property type="match status" value="1"/>
</dbReference>
<dbReference type="Pfam" id="PF00237">
    <property type="entry name" value="Ribosomal_L22"/>
    <property type="match status" value="1"/>
</dbReference>
<dbReference type="SUPFAM" id="SSF54843">
    <property type="entry name" value="Ribosomal protein L22"/>
    <property type="match status" value="1"/>
</dbReference>
<dbReference type="PROSITE" id="PS00464">
    <property type="entry name" value="RIBOSOMAL_L22"/>
    <property type="match status" value="1"/>
</dbReference>
<feature type="chain" id="PRO_1000142279" description="Large ribosomal subunit protein uL22">
    <location>
        <begin position="1"/>
        <end position="109"/>
    </location>
</feature>
<name>RL22_LEPCP</name>
<evidence type="ECO:0000255" key="1">
    <source>
        <dbReference type="HAMAP-Rule" id="MF_01331"/>
    </source>
</evidence>
<evidence type="ECO:0000305" key="2"/>
<organism>
    <name type="scientific">Leptothrix cholodnii (strain ATCC 51168 / LMG 8142 / SP-6)</name>
    <name type="common">Leptothrix discophora (strain SP-6)</name>
    <dbReference type="NCBI Taxonomy" id="395495"/>
    <lineage>
        <taxon>Bacteria</taxon>
        <taxon>Pseudomonadati</taxon>
        <taxon>Pseudomonadota</taxon>
        <taxon>Betaproteobacteria</taxon>
        <taxon>Burkholderiales</taxon>
        <taxon>Sphaerotilaceae</taxon>
        <taxon>Leptothrix</taxon>
    </lineage>
</organism>
<gene>
    <name evidence="1" type="primary">rplV</name>
    <name type="ordered locus">Lcho_3994</name>
</gene>
<accession>B1Y8I2</accession>